<sequence length="448" mass="49105">MSVRFSSASRRLGSVRLSSAGAALGAGNACGVPGIGSGFSCAFGGSSLAGGLGMGGASCGAFTANEHGLLSGNEKVTMQNLNDRLASYLENVQALEEANADLEQKIKDWYEKFGPGSCRGLDHDYSRYFPIIDDLRTQIISATAHNANIILQNDNARLTADDFRMKYENELALHQSVDADINGLRRVLDELTLCRTDLEVQLETLSEELAYLKKNHEEEMQALQCAAGGNVNVEMNAAPGVDLTVLLNNMRAEYEALAEQNRRDAEAWFQEKSASLQQQISDDAGATTSARNELTEMKRTLQTLEIELQSLLAMKHSLECSLTETEGNYCTQLAQIQAQISALEEQLHQVRTETEGQKLEYEQLLNVKAHLEKEIETYCRLIDGDEGSCVKAKGQGRPGNQTKDSPKTAIVKTVVEELDPRGKVLSSRVHTLEEKSTKVNKTEQRIPS</sequence>
<dbReference type="EMBL" id="AB013607">
    <property type="protein sequence ID" value="BAA34228.1"/>
    <property type="molecule type" value="mRNA"/>
</dbReference>
<dbReference type="EMBL" id="AL590991">
    <property type="status" value="NOT_ANNOTATED_CDS"/>
    <property type="molecule type" value="Genomic_DNA"/>
</dbReference>
<dbReference type="CCDS" id="CCDS25379.1"/>
<dbReference type="RefSeq" id="NP_034796.1">
    <property type="nucleotide sequence ID" value="NM_010666.2"/>
</dbReference>
<dbReference type="SMR" id="Q9Z320"/>
<dbReference type="BioGRID" id="201029">
    <property type="interactions" value="9"/>
</dbReference>
<dbReference type="FunCoup" id="Q9Z320">
    <property type="interactions" value="143"/>
</dbReference>
<dbReference type="IntAct" id="Q9Z320">
    <property type="interactions" value="1"/>
</dbReference>
<dbReference type="MINT" id="Q9Z320"/>
<dbReference type="STRING" id="10090.ENSMUSP00000017732"/>
<dbReference type="iPTMnet" id="Q9Z320"/>
<dbReference type="PhosphoSitePlus" id="Q9Z320"/>
<dbReference type="jPOST" id="Q9Z320"/>
<dbReference type="PaxDb" id="10090-ENSMUSP00000017732"/>
<dbReference type="ProteomicsDB" id="269164"/>
<dbReference type="Antibodypedia" id="55223">
    <property type="antibodies" value="12 antibodies from 9 providers"/>
</dbReference>
<dbReference type="DNASU" id="16675"/>
<dbReference type="Ensembl" id="ENSMUST00000017732.3">
    <property type="protein sequence ID" value="ENSMUSP00000017732.3"/>
    <property type="gene ID" value="ENSMUSG00000017588.3"/>
</dbReference>
<dbReference type="GeneID" id="16675"/>
<dbReference type="KEGG" id="mmu:16675"/>
<dbReference type="UCSC" id="uc007lip.1">
    <property type="organism name" value="mouse"/>
</dbReference>
<dbReference type="AGR" id="MGI:1339999"/>
<dbReference type="CTD" id="342574"/>
<dbReference type="MGI" id="MGI:1339999">
    <property type="gene designation" value="Krt27"/>
</dbReference>
<dbReference type="VEuPathDB" id="HostDB:ENSMUSG00000017588"/>
<dbReference type="eggNOG" id="ENOG502SIHJ">
    <property type="taxonomic scope" value="Eukaryota"/>
</dbReference>
<dbReference type="GeneTree" id="ENSGT00940000161982"/>
<dbReference type="HOGENOM" id="CLU_012560_8_3_1"/>
<dbReference type="InParanoid" id="Q9Z320"/>
<dbReference type="OMA" id="SRVHTME"/>
<dbReference type="OrthoDB" id="2441647at2759"/>
<dbReference type="PhylomeDB" id="Q9Z320"/>
<dbReference type="TreeFam" id="TF332742"/>
<dbReference type="Reactome" id="R-MMU-6805567">
    <property type="pathway name" value="Keratinization"/>
</dbReference>
<dbReference type="Reactome" id="R-MMU-6809371">
    <property type="pathway name" value="Formation of the cornified envelope"/>
</dbReference>
<dbReference type="BioGRID-ORCS" id="16675">
    <property type="hits" value="4 hits in 76 CRISPR screens"/>
</dbReference>
<dbReference type="PRO" id="PR:Q9Z320"/>
<dbReference type="Proteomes" id="UP000000589">
    <property type="component" value="Chromosome 11"/>
</dbReference>
<dbReference type="RNAct" id="Q9Z320">
    <property type="molecule type" value="protein"/>
</dbReference>
<dbReference type="Bgee" id="ENSMUSG00000017588">
    <property type="expression patterns" value="Expressed in hair follicle and 55 other cell types or tissues"/>
</dbReference>
<dbReference type="GO" id="GO:0005737">
    <property type="term" value="C:cytoplasm"/>
    <property type="evidence" value="ECO:0007669"/>
    <property type="project" value="UniProtKB-SubCell"/>
</dbReference>
<dbReference type="GO" id="GO:0005882">
    <property type="term" value="C:intermediate filament"/>
    <property type="evidence" value="ECO:0007669"/>
    <property type="project" value="UniProtKB-KW"/>
</dbReference>
<dbReference type="GO" id="GO:0005198">
    <property type="term" value="F:structural molecule activity"/>
    <property type="evidence" value="ECO:0007669"/>
    <property type="project" value="InterPro"/>
</dbReference>
<dbReference type="GO" id="GO:0031069">
    <property type="term" value="P:hair follicle morphogenesis"/>
    <property type="evidence" value="ECO:0000315"/>
    <property type="project" value="MGI"/>
</dbReference>
<dbReference type="FunFam" id="1.20.5.1160:FF:000002">
    <property type="entry name" value="Type I keratin 10"/>
    <property type="match status" value="1"/>
</dbReference>
<dbReference type="FunFam" id="1.20.5.170:FF:000002">
    <property type="entry name" value="Type I keratin KA11"/>
    <property type="match status" value="1"/>
</dbReference>
<dbReference type="FunFam" id="1.20.5.500:FF:000001">
    <property type="entry name" value="Type II keratin 23"/>
    <property type="match status" value="1"/>
</dbReference>
<dbReference type="Gene3D" id="1.20.5.170">
    <property type="match status" value="1"/>
</dbReference>
<dbReference type="Gene3D" id="1.20.5.500">
    <property type="entry name" value="Single helix bin"/>
    <property type="match status" value="1"/>
</dbReference>
<dbReference type="Gene3D" id="1.20.5.1160">
    <property type="entry name" value="Vasodilator-stimulated phosphoprotein"/>
    <property type="match status" value="1"/>
</dbReference>
<dbReference type="InterPro" id="IPR039008">
    <property type="entry name" value="IF_rod_dom"/>
</dbReference>
<dbReference type="InterPro" id="IPR002957">
    <property type="entry name" value="Keratin_I"/>
</dbReference>
<dbReference type="PANTHER" id="PTHR23239">
    <property type="entry name" value="INTERMEDIATE FILAMENT"/>
    <property type="match status" value="1"/>
</dbReference>
<dbReference type="PANTHER" id="PTHR23239:SF120">
    <property type="entry name" value="KERATIN, TYPE I CYTOSKELETAL 27"/>
    <property type="match status" value="1"/>
</dbReference>
<dbReference type="Pfam" id="PF00038">
    <property type="entry name" value="Filament"/>
    <property type="match status" value="1"/>
</dbReference>
<dbReference type="PRINTS" id="PR01248">
    <property type="entry name" value="TYPE1KERATIN"/>
</dbReference>
<dbReference type="SMART" id="SM01391">
    <property type="entry name" value="Filament"/>
    <property type="match status" value="1"/>
</dbReference>
<dbReference type="SUPFAM" id="SSF64593">
    <property type="entry name" value="Intermediate filament protein, coiled coil region"/>
    <property type="match status" value="2"/>
</dbReference>
<dbReference type="PROSITE" id="PS51842">
    <property type="entry name" value="IF_ROD_2"/>
    <property type="match status" value="1"/>
</dbReference>
<feature type="chain" id="PRO_0000312702" description="Keratin, type I cytoskeletal 27">
    <location>
        <begin position="1"/>
        <end position="448"/>
    </location>
</feature>
<feature type="domain" description="IF rod" evidence="2">
    <location>
        <begin position="74"/>
        <end position="389"/>
    </location>
</feature>
<feature type="region of interest" description="Head" evidence="1">
    <location>
        <begin position="1"/>
        <end position="73"/>
    </location>
</feature>
<feature type="region of interest" description="Coil 1A" evidence="1">
    <location>
        <begin position="74"/>
        <end position="109"/>
    </location>
</feature>
<feature type="region of interest" description="Linker 1" evidence="1">
    <location>
        <begin position="110"/>
        <end position="131"/>
    </location>
</feature>
<feature type="region of interest" description="Coil 1B" evidence="1">
    <location>
        <begin position="132"/>
        <end position="223"/>
    </location>
</feature>
<feature type="region of interest" description="Linker 12" evidence="1">
    <location>
        <begin position="224"/>
        <end position="246"/>
    </location>
</feature>
<feature type="region of interest" description="Coil 2" evidence="1">
    <location>
        <begin position="247"/>
        <end position="385"/>
    </location>
</feature>
<feature type="region of interest" description="Tail" evidence="1">
    <location>
        <begin position="386"/>
        <end position="448"/>
    </location>
</feature>
<feature type="region of interest" description="Disordered" evidence="3">
    <location>
        <begin position="427"/>
        <end position="448"/>
    </location>
</feature>
<feature type="compositionally biased region" description="Basic and acidic residues" evidence="3">
    <location>
        <begin position="430"/>
        <end position="448"/>
    </location>
</feature>
<feature type="mutagenesis site" description="In Rex wavy coat; mice exhibit curly hair and vibrissae. The diameter of the hair shaft is irregular due to morphological abnormalities in all three layers of the irs." evidence="6">
    <location>
        <begin position="315"/>
        <end position="388"/>
    </location>
</feature>
<proteinExistence type="evidence at protein level"/>
<protein>
    <recommendedName>
        <fullName>Keratin, type I cytoskeletal 27</fullName>
    </recommendedName>
    <alternativeName>
        <fullName>Cytokeratin-27</fullName>
        <shortName>CK-27</shortName>
    </alternativeName>
    <alternativeName>
        <fullName>Keratin complex-1, acidic, gene C29</fullName>
    </alternativeName>
    <alternativeName>
        <fullName>Keratin-27</fullName>
        <shortName>K27</shortName>
    </alternativeName>
    <alternativeName>
        <fullName>Type I inner root sheath-specific keratin-K25irs3</fullName>
    </alternativeName>
</protein>
<gene>
    <name evidence="9" type="primary">Krt27</name>
    <name evidence="8" type="synonym">c29</name>
    <name evidence="9" type="synonym">Krt1-c29</name>
</gene>
<organism>
    <name type="scientific">Mus musculus</name>
    <name type="common">Mouse</name>
    <dbReference type="NCBI Taxonomy" id="10090"/>
    <lineage>
        <taxon>Eukaryota</taxon>
        <taxon>Metazoa</taxon>
        <taxon>Chordata</taxon>
        <taxon>Craniata</taxon>
        <taxon>Vertebrata</taxon>
        <taxon>Euteleostomi</taxon>
        <taxon>Mammalia</taxon>
        <taxon>Eutheria</taxon>
        <taxon>Euarchontoglires</taxon>
        <taxon>Glires</taxon>
        <taxon>Rodentia</taxon>
        <taxon>Myomorpha</taxon>
        <taxon>Muroidea</taxon>
        <taxon>Muridae</taxon>
        <taxon>Murinae</taxon>
        <taxon>Mus</taxon>
        <taxon>Mus</taxon>
    </lineage>
</organism>
<evidence type="ECO:0000255" key="1"/>
<evidence type="ECO:0000255" key="2">
    <source>
        <dbReference type="PROSITE-ProRule" id="PRU01188"/>
    </source>
</evidence>
<evidence type="ECO:0000256" key="3">
    <source>
        <dbReference type="SAM" id="MobiDB-lite"/>
    </source>
</evidence>
<evidence type="ECO:0000269" key="4">
    <source>
    </source>
</evidence>
<evidence type="ECO:0000269" key="5">
    <source>
    </source>
</evidence>
<evidence type="ECO:0000269" key="6">
    <source>
    </source>
</evidence>
<evidence type="ECO:0000305" key="7"/>
<evidence type="ECO:0000312" key="8">
    <source>
        <dbReference type="EMBL" id="BAA34228.1"/>
    </source>
</evidence>
<evidence type="ECO:0000312" key="9">
    <source>
        <dbReference type="MGI" id="MGI:1339999"/>
    </source>
</evidence>
<reference evidence="7 8" key="1">
    <citation type="journal article" date="1999" name="Genomics">
        <title>The genomic organization of type I keratin genes in mice.</title>
        <authorList>
            <person name="Sato H."/>
            <person name="Koide T."/>
            <person name="Sagai T."/>
            <person name="Ishiguro S."/>
            <person name="Tamai M."/>
            <person name="Saitou N."/>
            <person name="Shiroishi T."/>
        </authorList>
    </citation>
    <scope>NUCLEOTIDE SEQUENCE [MRNA]</scope>
    <scope>TISSUE SPECIFICITY</scope>
    <source>
        <strain evidence="8">C57BL/10J</strain>
        <tissue evidence="8">Skin</tissue>
    </source>
</reference>
<reference evidence="7" key="2">
    <citation type="journal article" date="2007" name="Genomics">
        <title>Mutations in the helix termination motif of mouse type I IRS keratin genes impair the assembly of keratin intermediate filament.</title>
        <authorList>
            <person name="Tanaka S."/>
            <person name="Miura I."/>
            <person name="Yoshiki A."/>
            <person name="Kato Y."/>
            <person name="Yokoyama H."/>
            <person name="Shinogi A."/>
            <person name="Masuya H."/>
            <person name="Wakana S."/>
            <person name="Tamura M."/>
            <person name="Shiroishi T."/>
        </authorList>
    </citation>
    <scope>NUCLEOTIDE SEQUENCE [MRNA]</scope>
    <scope>FUNCTION</scope>
    <scope>MUTAGENESIS OF 315-LYS--SER-388</scope>
    <source>
        <strain evidence="6">C57BL/6J</strain>
        <tissue evidence="6">Skin</tissue>
    </source>
</reference>
<reference key="3">
    <citation type="journal article" date="2009" name="PLoS Biol.">
        <title>Lineage-specific biology revealed by a finished genome assembly of the mouse.</title>
        <authorList>
            <person name="Church D.M."/>
            <person name="Goodstadt L."/>
            <person name="Hillier L.W."/>
            <person name="Zody M.C."/>
            <person name="Goldstein S."/>
            <person name="She X."/>
            <person name="Bult C.J."/>
            <person name="Agarwala R."/>
            <person name="Cherry J.L."/>
            <person name="DiCuccio M."/>
            <person name="Hlavina W."/>
            <person name="Kapustin Y."/>
            <person name="Meric P."/>
            <person name="Maglott D."/>
            <person name="Birtle Z."/>
            <person name="Marques A.C."/>
            <person name="Graves T."/>
            <person name="Zhou S."/>
            <person name="Teague B."/>
            <person name="Potamousis K."/>
            <person name="Churas C."/>
            <person name="Place M."/>
            <person name="Herschleb J."/>
            <person name="Runnheim R."/>
            <person name="Forrest D."/>
            <person name="Amos-Landgraf J."/>
            <person name="Schwartz D.C."/>
            <person name="Cheng Z."/>
            <person name="Lindblad-Toh K."/>
            <person name="Eichler E.E."/>
            <person name="Ponting C.P."/>
        </authorList>
    </citation>
    <scope>NUCLEOTIDE SEQUENCE [LARGE SCALE GENOMIC DNA]</scope>
    <source>
        <strain>C57BL/6J</strain>
    </source>
</reference>
<reference evidence="7" key="4">
    <citation type="journal article" date="2004" name="Br. J. Dermatol.">
        <title>Functional analysis of keratin components in the mouse hair follicle inner root sheath.</title>
        <authorList>
            <person name="Porter R.M."/>
            <person name="Gandhi M."/>
            <person name="Wilson N.J."/>
            <person name="Wood P."/>
            <person name="McLean W.H.I."/>
            <person name="Lane E.B."/>
        </authorList>
    </citation>
    <scope>FUNCTION</scope>
    <scope>SUBUNIT</scope>
    <scope>TISSUE SPECIFICITY</scope>
    <scope>SUBCELLULAR LOCATION</scope>
</reference>
<comment type="function">
    <text evidence="5 6">Essential for the proper assembly of type I and type II keratin protein complexes and formation of keratin intermediate filaments in the inner root sheath (irs).</text>
</comment>
<comment type="subunit">
    <text evidence="5 7">Heterotetramer of two type I and two type II keratins. Interacts with KRT6A to form filaments.</text>
</comment>
<comment type="subcellular location">
    <subcellularLocation>
        <location evidence="5">Cytoplasm</location>
    </subcellularLocation>
</comment>
<comment type="tissue specificity">
    <text evidence="4 5">Expressed in skin. Expressed in the Henle layer and cuticle of the irs in hair follicle bulb. In the hair follicle, expression was observed in all layers of the irs but was stronger in the Henle layer and cuticle than the Huxley layer until the Henle layer differentiated (at protein level).</text>
</comment>
<comment type="miscellaneous">
    <text evidence="7">There are two types of cytoskeletal and microfibrillar keratin: I (acidic; 40-55 kDa) and II (neutral to basic; 56-70 kDa).</text>
</comment>
<comment type="similarity">
    <text evidence="2">Belongs to the intermediate filament family.</text>
</comment>
<keyword id="KW-0175">Coiled coil</keyword>
<keyword id="KW-0963">Cytoplasm</keyword>
<keyword id="KW-0403">Intermediate filament</keyword>
<keyword id="KW-0416">Keratin</keyword>
<keyword id="KW-1185">Reference proteome</keyword>
<accession>Q9Z320</accession>
<name>K1C27_MOUSE</name>